<reference key="1">
    <citation type="journal article" date="2011" name="PLoS ONE">
        <title>The genome of Akkermansia muciniphila, a dedicated intestinal mucin degrader, and its use in exploring intestinal metagenomes.</title>
        <authorList>
            <person name="van Passel M.W."/>
            <person name="Kant R."/>
            <person name="Zoetendal E.G."/>
            <person name="Plugge C.M."/>
            <person name="Derrien M."/>
            <person name="Malfatti S.A."/>
            <person name="Chain P.S."/>
            <person name="Woyke T."/>
            <person name="Palva A."/>
            <person name="de Vos W.M."/>
            <person name="Smidt H."/>
        </authorList>
    </citation>
    <scope>NUCLEOTIDE SEQUENCE [LARGE SCALE GENOMIC DNA]</scope>
    <source>
        <strain>ATCC BAA-835 / DSM 22959 / JCM 33894 / BCRC 81048 / CCUG 64013 / CIP 107961 / Muc</strain>
    </source>
</reference>
<gene>
    <name evidence="1" type="primary">dnaK</name>
    <name type="ordered locus">Amuc_1406</name>
</gene>
<keyword id="KW-0067">ATP-binding</keyword>
<keyword id="KW-0143">Chaperone</keyword>
<keyword id="KW-0547">Nucleotide-binding</keyword>
<keyword id="KW-0597">Phosphoprotein</keyword>
<keyword id="KW-1185">Reference proteome</keyword>
<keyword id="KW-0346">Stress response</keyword>
<feature type="chain" id="PRO_1000119660" description="Chaperone protein DnaK">
    <location>
        <begin position="1"/>
        <end position="642"/>
    </location>
</feature>
<feature type="region of interest" description="Disordered" evidence="2">
    <location>
        <begin position="600"/>
        <end position="642"/>
    </location>
</feature>
<feature type="compositionally biased region" description="Low complexity" evidence="2">
    <location>
        <begin position="600"/>
        <end position="616"/>
    </location>
</feature>
<feature type="compositionally biased region" description="Basic and acidic residues" evidence="2">
    <location>
        <begin position="623"/>
        <end position="634"/>
    </location>
</feature>
<feature type="modified residue" description="Phosphothreonine; by autocatalysis" evidence="1">
    <location>
        <position position="200"/>
    </location>
</feature>
<organism>
    <name type="scientific">Akkermansia muciniphila (strain ATCC BAA-835 / DSM 22959 / JCM 33894 / BCRC 81048 / CCUG 64013 / CIP 107961 / Muc)</name>
    <dbReference type="NCBI Taxonomy" id="349741"/>
    <lineage>
        <taxon>Bacteria</taxon>
        <taxon>Pseudomonadati</taxon>
        <taxon>Verrucomicrobiota</taxon>
        <taxon>Verrucomicrobiia</taxon>
        <taxon>Verrucomicrobiales</taxon>
        <taxon>Akkermansiaceae</taxon>
        <taxon>Akkermansia</taxon>
    </lineage>
</organism>
<proteinExistence type="inferred from homology"/>
<dbReference type="EMBL" id="CP001071">
    <property type="protein sequence ID" value="ACD05229.1"/>
    <property type="molecule type" value="Genomic_DNA"/>
</dbReference>
<dbReference type="RefSeq" id="WP_012420444.1">
    <property type="nucleotide sequence ID" value="NZ_CP071807.1"/>
</dbReference>
<dbReference type="SMR" id="B2UKV6"/>
<dbReference type="STRING" id="349741.Amuc_1406"/>
<dbReference type="PaxDb" id="349741-Amuc_1406"/>
<dbReference type="GeneID" id="60880883"/>
<dbReference type="KEGG" id="amu:Amuc_1406"/>
<dbReference type="eggNOG" id="COG0443">
    <property type="taxonomic scope" value="Bacteria"/>
</dbReference>
<dbReference type="HOGENOM" id="CLU_005965_2_1_0"/>
<dbReference type="OrthoDB" id="9766019at2"/>
<dbReference type="BioCyc" id="AMUC349741:G1GBX-1497-MONOMER"/>
<dbReference type="Proteomes" id="UP000001031">
    <property type="component" value="Chromosome"/>
</dbReference>
<dbReference type="GO" id="GO:0005524">
    <property type="term" value="F:ATP binding"/>
    <property type="evidence" value="ECO:0007669"/>
    <property type="project" value="UniProtKB-UniRule"/>
</dbReference>
<dbReference type="GO" id="GO:0140662">
    <property type="term" value="F:ATP-dependent protein folding chaperone"/>
    <property type="evidence" value="ECO:0007669"/>
    <property type="project" value="InterPro"/>
</dbReference>
<dbReference type="GO" id="GO:0051082">
    <property type="term" value="F:unfolded protein binding"/>
    <property type="evidence" value="ECO:0007669"/>
    <property type="project" value="InterPro"/>
</dbReference>
<dbReference type="CDD" id="cd10234">
    <property type="entry name" value="ASKHA_NBD_HSP70_DnaK-like"/>
    <property type="match status" value="1"/>
</dbReference>
<dbReference type="FunFam" id="2.60.34.10:FF:000014">
    <property type="entry name" value="Chaperone protein DnaK HSP70"/>
    <property type="match status" value="1"/>
</dbReference>
<dbReference type="FunFam" id="3.30.30.30:FF:000003">
    <property type="entry name" value="Heat shock protein 9"/>
    <property type="match status" value="1"/>
</dbReference>
<dbReference type="FunFam" id="1.20.1270.10:FF:000001">
    <property type="entry name" value="Molecular chaperone DnaK"/>
    <property type="match status" value="1"/>
</dbReference>
<dbReference type="FunFam" id="3.30.420.40:FF:000004">
    <property type="entry name" value="Molecular chaperone DnaK"/>
    <property type="match status" value="1"/>
</dbReference>
<dbReference type="FunFam" id="3.90.640.10:FF:000003">
    <property type="entry name" value="Molecular chaperone DnaK"/>
    <property type="match status" value="1"/>
</dbReference>
<dbReference type="Gene3D" id="1.20.1270.10">
    <property type="match status" value="1"/>
</dbReference>
<dbReference type="Gene3D" id="3.30.420.40">
    <property type="match status" value="2"/>
</dbReference>
<dbReference type="Gene3D" id="3.90.640.10">
    <property type="entry name" value="Actin, Chain A, domain 4"/>
    <property type="match status" value="1"/>
</dbReference>
<dbReference type="Gene3D" id="2.60.34.10">
    <property type="entry name" value="Substrate Binding Domain Of DNAk, Chain A, domain 1"/>
    <property type="match status" value="1"/>
</dbReference>
<dbReference type="HAMAP" id="MF_00332">
    <property type="entry name" value="DnaK"/>
    <property type="match status" value="1"/>
</dbReference>
<dbReference type="InterPro" id="IPR043129">
    <property type="entry name" value="ATPase_NBD"/>
</dbReference>
<dbReference type="InterPro" id="IPR012725">
    <property type="entry name" value="Chaperone_DnaK"/>
</dbReference>
<dbReference type="InterPro" id="IPR018181">
    <property type="entry name" value="Heat_shock_70_CS"/>
</dbReference>
<dbReference type="InterPro" id="IPR029048">
    <property type="entry name" value="HSP70_C_sf"/>
</dbReference>
<dbReference type="InterPro" id="IPR029047">
    <property type="entry name" value="HSP70_peptide-bd_sf"/>
</dbReference>
<dbReference type="InterPro" id="IPR013126">
    <property type="entry name" value="Hsp_70_fam"/>
</dbReference>
<dbReference type="NCBIfam" id="NF001413">
    <property type="entry name" value="PRK00290.1"/>
    <property type="match status" value="1"/>
</dbReference>
<dbReference type="NCBIfam" id="TIGR02350">
    <property type="entry name" value="prok_dnaK"/>
    <property type="match status" value="1"/>
</dbReference>
<dbReference type="PANTHER" id="PTHR19375">
    <property type="entry name" value="HEAT SHOCK PROTEIN 70KDA"/>
    <property type="match status" value="1"/>
</dbReference>
<dbReference type="Pfam" id="PF00012">
    <property type="entry name" value="HSP70"/>
    <property type="match status" value="1"/>
</dbReference>
<dbReference type="PRINTS" id="PR00301">
    <property type="entry name" value="HEATSHOCK70"/>
</dbReference>
<dbReference type="SUPFAM" id="SSF53067">
    <property type="entry name" value="Actin-like ATPase domain"/>
    <property type="match status" value="2"/>
</dbReference>
<dbReference type="SUPFAM" id="SSF100920">
    <property type="entry name" value="Heat shock protein 70kD (HSP70), peptide-binding domain"/>
    <property type="match status" value="1"/>
</dbReference>
<dbReference type="PROSITE" id="PS00297">
    <property type="entry name" value="HSP70_1"/>
    <property type="match status" value="1"/>
</dbReference>
<dbReference type="PROSITE" id="PS00329">
    <property type="entry name" value="HSP70_2"/>
    <property type="match status" value="1"/>
</dbReference>
<dbReference type="PROSITE" id="PS01036">
    <property type="entry name" value="HSP70_3"/>
    <property type="match status" value="1"/>
</dbReference>
<protein>
    <recommendedName>
        <fullName evidence="1">Chaperone protein DnaK</fullName>
    </recommendedName>
    <alternativeName>
        <fullName evidence="1">HSP70</fullName>
    </alternativeName>
    <alternativeName>
        <fullName evidence="1">Heat shock 70 kDa protein</fullName>
    </alternativeName>
    <alternativeName>
        <fullName evidence="1">Heat shock protein 70</fullName>
    </alternativeName>
</protein>
<name>DNAK_AKKM8</name>
<accession>B2UKV6</accession>
<comment type="function">
    <text evidence="1">Acts as a chaperone.</text>
</comment>
<comment type="induction">
    <text evidence="1">By stress conditions e.g. heat shock.</text>
</comment>
<comment type="similarity">
    <text evidence="1">Belongs to the heat shock protein 70 family.</text>
</comment>
<sequence length="642" mass="68854">MAKILGIDLGTTNSCMAVMEGGQGTVLENSEGARTTPSIVAFTKSGERLVGQAAKRQAVTNPKNTVFSSKRLIGRKYSELTEEDKKVPYEIVEAPNGDAYIRVDVGGEKKTFSPQEIASMVLAKLKADAESKLGETITEAVITVPAYFNDAQRNATKAAGEIAGLKVRRIINEPTAAALAYGLDKKSNENIAVYDLGGGTFDISVLEIGDGVFEVKASDGDTHLGGDDWDNAIINWIIGEFKKDSGMDLSNQPDAIQRIKEEAEKAKIALSSTQSYDISLPFITADASGPKHIQLTLSRPKLEQLTEDLLDRTRKPVLDCIAASGLKTGDIDELVLVGGMTRMPAVQEMAHTLAGKEPHKGVNPDEVVALGAAIQGGVLQGDVNDVLLLDVTPLTLSIETMGGIATPMIERNTTIPVRKSQVFSTAADNQPAVDIRICQGERKMFEDNKLLGNFKLDGISPAPRGVPQIEVTFDIDANGILHVSAKDKGTGKEQKISIQGSSGLSKDEIERAKRDAEAHAEEDKKRAEEIDTINQADSLCFSVERQLKDMGDKLPADLKREIEDKVTRLKEAVSKKDVTAIKAGKEDLESRLEALYKAAEAAQQSAGAAGPMPGAPAEEEPSDGPRKAKGRVVDAEIVDDDK</sequence>
<evidence type="ECO:0000255" key="1">
    <source>
        <dbReference type="HAMAP-Rule" id="MF_00332"/>
    </source>
</evidence>
<evidence type="ECO:0000256" key="2">
    <source>
        <dbReference type="SAM" id="MobiDB-lite"/>
    </source>
</evidence>